<name>ATPA_MYCS5</name>
<proteinExistence type="inferred from homology"/>
<keyword id="KW-0066">ATP synthesis</keyword>
<keyword id="KW-0067">ATP-binding</keyword>
<keyword id="KW-1003">Cell membrane</keyword>
<keyword id="KW-0139">CF(1)</keyword>
<keyword id="KW-0375">Hydrogen ion transport</keyword>
<keyword id="KW-0406">Ion transport</keyword>
<keyword id="KW-0472">Membrane</keyword>
<keyword id="KW-0547">Nucleotide-binding</keyword>
<keyword id="KW-1185">Reference proteome</keyword>
<keyword id="KW-1278">Translocase</keyword>
<keyword id="KW-0813">Transport</keyword>
<evidence type="ECO:0000255" key="1">
    <source>
        <dbReference type="HAMAP-Rule" id="MF_01346"/>
    </source>
</evidence>
<organism>
    <name type="scientific">Mycoplasmopsis synoviae (strain 53)</name>
    <name type="common">Mycoplasma synoviae</name>
    <dbReference type="NCBI Taxonomy" id="262723"/>
    <lineage>
        <taxon>Bacteria</taxon>
        <taxon>Bacillati</taxon>
        <taxon>Mycoplasmatota</taxon>
        <taxon>Mycoplasmoidales</taxon>
        <taxon>Metamycoplasmataceae</taxon>
        <taxon>Mycoplasmopsis</taxon>
    </lineage>
</organism>
<gene>
    <name evidence="1" type="primary">atpA</name>
    <name type="ordered locus">MS53_0407</name>
</gene>
<dbReference type="EC" id="7.1.2.2" evidence="1"/>
<dbReference type="EMBL" id="AE017245">
    <property type="protein sequence ID" value="AAZ43819.1"/>
    <property type="molecule type" value="Genomic_DNA"/>
</dbReference>
<dbReference type="RefSeq" id="WP_011283550.1">
    <property type="nucleotide sequence ID" value="NC_007294.1"/>
</dbReference>
<dbReference type="SMR" id="Q4A602"/>
<dbReference type="STRING" id="262723.MS53_0407"/>
<dbReference type="KEGG" id="msy:MS53_0407"/>
<dbReference type="eggNOG" id="COG0056">
    <property type="taxonomic scope" value="Bacteria"/>
</dbReference>
<dbReference type="HOGENOM" id="CLU_010091_2_1_14"/>
<dbReference type="OrthoDB" id="9803053at2"/>
<dbReference type="Proteomes" id="UP000000549">
    <property type="component" value="Chromosome"/>
</dbReference>
<dbReference type="GO" id="GO:0005886">
    <property type="term" value="C:plasma membrane"/>
    <property type="evidence" value="ECO:0007669"/>
    <property type="project" value="UniProtKB-SubCell"/>
</dbReference>
<dbReference type="GO" id="GO:0045259">
    <property type="term" value="C:proton-transporting ATP synthase complex"/>
    <property type="evidence" value="ECO:0007669"/>
    <property type="project" value="UniProtKB-KW"/>
</dbReference>
<dbReference type="GO" id="GO:0043531">
    <property type="term" value="F:ADP binding"/>
    <property type="evidence" value="ECO:0007669"/>
    <property type="project" value="TreeGrafter"/>
</dbReference>
<dbReference type="GO" id="GO:0005524">
    <property type="term" value="F:ATP binding"/>
    <property type="evidence" value="ECO:0007669"/>
    <property type="project" value="UniProtKB-UniRule"/>
</dbReference>
<dbReference type="GO" id="GO:0046933">
    <property type="term" value="F:proton-transporting ATP synthase activity, rotational mechanism"/>
    <property type="evidence" value="ECO:0007669"/>
    <property type="project" value="UniProtKB-UniRule"/>
</dbReference>
<dbReference type="CDD" id="cd18113">
    <property type="entry name" value="ATP-synt_F1_alpha_C"/>
    <property type="match status" value="1"/>
</dbReference>
<dbReference type="CDD" id="cd18116">
    <property type="entry name" value="ATP-synt_F1_alpha_N"/>
    <property type="match status" value="1"/>
</dbReference>
<dbReference type="CDD" id="cd01132">
    <property type="entry name" value="F1-ATPase_alpha_CD"/>
    <property type="match status" value="1"/>
</dbReference>
<dbReference type="FunFam" id="3.40.50.300:FF:000002">
    <property type="entry name" value="ATP synthase subunit alpha"/>
    <property type="match status" value="1"/>
</dbReference>
<dbReference type="Gene3D" id="2.40.30.20">
    <property type="match status" value="1"/>
</dbReference>
<dbReference type="Gene3D" id="1.20.150.20">
    <property type="entry name" value="ATP synthase alpha/beta chain, C-terminal domain"/>
    <property type="match status" value="1"/>
</dbReference>
<dbReference type="Gene3D" id="3.40.50.300">
    <property type="entry name" value="P-loop containing nucleotide triphosphate hydrolases"/>
    <property type="match status" value="1"/>
</dbReference>
<dbReference type="HAMAP" id="MF_01346">
    <property type="entry name" value="ATP_synth_alpha_bact"/>
    <property type="match status" value="1"/>
</dbReference>
<dbReference type="InterPro" id="IPR023366">
    <property type="entry name" value="ATP_synth_asu-like_sf"/>
</dbReference>
<dbReference type="InterPro" id="IPR000793">
    <property type="entry name" value="ATP_synth_asu_C"/>
</dbReference>
<dbReference type="InterPro" id="IPR038376">
    <property type="entry name" value="ATP_synth_asu_C_sf"/>
</dbReference>
<dbReference type="InterPro" id="IPR033732">
    <property type="entry name" value="ATP_synth_F1_a_nt-bd_dom"/>
</dbReference>
<dbReference type="InterPro" id="IPR005294">
    <property type="entry name" value="ATP_synth_F1_asu"/>
</dbReference>
<dbReference type="InterPro" id="IPR020003">
    <property type="entry name" value="ATPase_a/bsu_AS"/>
</dbReference>
<dbReference type="InterPro" id="IPR004100">
    <property type="entry name" value="ATPase_F1/V1/A1_a/bsu_N"/>
</dbReference>
<dbReference type="InterPro" id="IPR036121">
    <property type="entry name" value="ATPase_F1/V1/A1_a/bsu_N_sf"/>
</dbReference>
<dbReference type="InterPro" id="IPR000194">
    <property type="entry name" value="ATPase_F1/V1/A1_a/bsu_nucl-bd"/>
</dbReference>
<dbReference type="InterPro" id="IPR027417">
    <property type="entry name" value="P-loop_NTPase"/>
</dbReference>
<dbReference type="NCBIfam" id="TIGR00962">
    <property type="entry name" value="atpA"/>
    <property type="match status" value="1"/>
</dbReference>
<dbReference type="NCBIfam" id="NF009884">
    <property type="entry name" value="PRK13343.1"/>
    <property type="match status" value="1"/>
</dbReference>
<dbReference type="PANTHER" id="PTHR48082">
    <property type="entry name" value="ATP SYNTHASE SUBUNIT ALPHA, MITOCHONDRIAL"/>
    <property type="match status" value="1"/>
</dbReference>
<dbReference type="PANTHER" id="PTHR48082:SF2">
    <property type="entry name" value="ATP SYNTHASE SUBUNIT ALPHA, MITOCHONDRIAL"/>
    <property type="match status" value="1"/>
</dbReference>
<dbReference type="Pfam" id="PF00006">
    <property type="entry name" value="ATP-synt_ab"/>
    <property type="match status" value="1"/>
</dbReference>
<dbReference type="Pfam" id="PF00306">
    <property type="entry name" value="ATP-synt_ab_C"/>
    <property type="match status" value="1"/>
</dbReference>
<dbReference type="Pfam" id="PF02874">
    <property type="entry name" value="ATP-synt_ab_N"/>
    <property type="match status" value="1"/>
</dbReference>
<dbReference type="SUPFAM" id="SSF47917">
    <property type="entry name" value="C-terminal domain of alpha and beta subunits of F1 ATP synthase"/>
    <property type="match status" value="1"/>
</dbReference>
<dbReference type="SUPFAM" id="SSF50615">
    <property type="entry name" value="N-terminal domain of alpha and beta subunits of F1 ATP synthase"/>
    <property type="match status" value="1"/>
</dbReference>
<dbReference type="SUPFAM" id="SSF52540">
    <property type="entry name" value="P-loop containing nucleoside triphosphate hydrolases"/>
    <property type="match status" value="1"/>
</dbReference>
<dbReference type="PROSITE" id="PS00152">
    <property type="entry name" value="ATPASE_ALPHA_BETA"/>
    <property type="match status" value="1"/>
</dbReference>
<reference key="1">
    <citation type="journal article" date="2005" name="J. Bacteriol.">
        <title>Swine and poultry pathogens: the complete genome sequences of two strains of Mycoplasma hyopneumoniae and a strain of Mycoplasma synoviae.</title>
        <authorList>
            <person name="Vasconcelos A.T.R."/>
            <person name="Ferreira H.B."/>
            <person name="Bizarro C.V."/>
            <person name="Bonatto S.L."/>
            <person name="Carvalho M.O."/>
            <person name="Pinto P.M."/>
            <person name="Almeida D.F."/>
            <person name="Almeida L.G.P."/>
            <person name="Almeida R."/>
            <person name="Alves-Junior L."/>
            <person name="Assuncao E.N."/>
            <person name="Azevedo V.A.C."/>
            <person name="Bogo M.R."/>
            <person name="Brigido M.M."/>
            <person name="Brocchi M."/>
            <person name="Burity H.A."/>
            <person name="Camargo A.A."/>
            <person name="Camargo S.S."/>
            <person name="Carepo M.S."/>
            <person name="Carraro D.M."/>
            <person name="de Mattos Cascardo J.C."/>
            <person name="Castro L.A."/>
            <person name="Cavalcanti G."/>
            <person name="Chemale G."/>
            <person name="Collevatti R.G."/>
            <person name="Cunha C.W."/>
            <person name="Dallagiovanna B."/>
            <person name="Dambros B.P."/>
            <person name="Dellagostin O.A."/>
            <person name="Falcao C."/>
            <person name="Fantinatti-Garboggini F."/>
            <person name="Felipe M.S.S."/>
            <person name="Fiorentin L."/>
            <person name="Franco G.R."/>
            <person name="Freitas N.S.A."/>
            <person name="Frias D."/>
            <person name="Grangeiro T.B."/>
            <person name="Grisard E.C."/>
            <person name="Guimaraes C.T."/>
            <person name="Hungria M."/>
            <person name="Jardim S.N."/>
            <person name="Krieger M.A."/>
            <person name="Laurino J.P."/>
            <person name="Lima L.F.A."/>
            <person name="Lopes M.I."/>
            <person name="Loreto E.L.S."/>
            <person name="Madeira H.M.F."/>
            <person name="Manfio G.P."/>
            <person name="Maranhao A.Q."/>
            <person name="Martinkovics C.T."/>
            <person name="Medeiros S.R.B."/>
            <person name="Moreira M.A.M."/>
            <person name="Neiva M."/>
            <person name="Ramalho-Neto C.E."/>
            <person name="Nicolas M.F."/>
            <person name="Oliveira S.C."/>
            <person name="Paixao R.F.C."/>
            <person name="Pedrosa F.O."/>
            <person name="Pena S.D.J."/>
            <person name="Pereira M."/>
            <person name="Pereira-Ferrari L."/>
            <person name="Piffer I."/>
            <person name="Pinto L.S."/>
            <person name="Potrich D.P."/>
            <person name="Salim A.C.M."/>
            <person name="Santos F.R."/>
            <person name="Schmitt R."/>
            <person name="Schneider M.P.C."/>
            <person name="Schrank A."/>
            <person name="Schrank I.S."/>
            <person name="Schuck A.F."/>
            <person name="Seuanez H.N."/>
            <person name="Silva D.W."/>
            <person name="Silva R."/>
            <person name="Silva S.C."/>
            <person name="Soares C.M.A."/>
            <person name="Souza K.R.L."/>
            <person name="Souza R.C."/>
            <person name="Staats C.C."/>
            <person name="Steffens M.B.R."/>
            <person name="Teixeira S.M.R."/>
            <person name="Urmenyi T.P."/>
            <person name="Vainstein M.H."/>
            <person name="Zuccherato L.W."/>
            <person name="Simpson A.J.G."/>
            <person name="Zaha A."/>
        </authorList>
    </citation>
    <scope>NUCLEOTIDE SEQUENCE [LARGE SCALE GENOMIC DNA]</scope>
    <source>
        <strain>53</strain>
    </source>
</reference>
<sequence length="530" mass="57891">MKNNFDDISAIIKDRIKNFDQKIDRSEVGKVISIGDGIALVSGLDKVENSEVVIFDNDVYGLALNLEEEAVGVALFGNSNLISEGDSVRRSGQVISVPVGEAMLSRVVDSLGKPIDGKGPIKSSKMAKIFKLAPGVMTRKEVNQPLETGIIAIDSMIPVGKGQRELIIGDRQTGKTAIAIDTIINQKGKNVYCVYVAIGQKNSTVAQIVQKLNDTGSMDYTTVVVAGASESAPQQYIAPYTGVTIAEEFMSQGKDVLVIYDDLSKHAIAYRTLSLLLRRPPGREAYPGDVFYLHSQLLERAARLNKKYGGGSITAFPIIETQQGDISAYIPTNVISITDGQIFTKESLFNSGQRPAVDVGFSVSRVGSAAQTKAMKSVVGSLKLELAQYNEMLAFAQFGSDLDENTKAILEHGAKVYELIKQDQYSPISQADQAVILIGVKERIINIVPKEWISEYRNQVIKYLQKDPDGKVIESNIINEGIISKENYAKLEQALVKICKSIVSSIPNYDASMHKSLPEKYLETKEVDNV</sequence>
<comment type="function">
    <text evidence="1">Produces ATP from ADP in the presence of a proton gradient across the membrane. The alpha chain is a regulatory subunit.</text>
</comment>
<comment type="catalytic activity">
    <reaction evidence="1">
        <text>ATP + H2O + 4 H(+)(in) = ADP + phosphate + 5 H(+)(out)</text>
        <dbReference type="Rhea" id="RHEA:57720"/>
        <dbReference type="ChEBI" id="CHEBI:15377"/>
        <dbReference type="ChEBI" id="CHEBI:15378"/>
        <dbReference type="ChEBI" id="CHEBI:30616"/>
        <dbReference type="ChEBI" id="CHEBI:43474"/>
        <dbReference type="ChEBI" id="CHEBI:456216"/>
        <dbReference type="EC" id="7.1.2.2"/>
    </reaction>
</comment>
<comment type="subunit">
    <text evidence="1">F-type ATPases have 2 components, CF(1) - the catalytic core - and CF(0) - the membrane proton channel. CF(1) has five subunits: alpha(3), beta(3), gamma(1), delta(1), epsilon(1). CF(0) has three main subunits: a(1), b(2) and c(9-12). The alpha and beta chains form an alternating ring which encloses part of the gamma chain. CF(1) is attached to CF(0) by a central stalk formed by the gamma and epsilon chains, while a peripheral stalk is formed by the delta and b chains.</text>
</comment>
<comment type="subcellular location">
    <subcellularLocation>
        <location evidence="1">Cell membrane</location>
        <topology evidence="1">Peripheral membrane protein</topology>
    </subcellularLocation>
</comment>
<comment type="similarity">
    <text evidence="1">Belongs to the ATPase alpha/beta chains family.</text>
</comment>
<feature type="chain" id="PRO_0000238298" description="ATP synthase subunit alpha">
    <location>
        <begin position="1"/>
        <end position="530"/>
    </location>
</feature>
<feature type="binding site" evidence="1">
    <location>
        <begin position="169"/>
        <end position="176"/>
    </location>
    <ligand>
        <name>ATP</name>
        <dbReference type="ChEBI" id="CHEBI:30616"/>
    </ligand>
</feature>
<feature type="site" description="Required for activity" evidence="1">
    <location>
        <position position="362"/>
    </location>
</feature>
<protein>
    <recommendedName>
        <fullName evidence="1">ATP synthase subunit alpha</fullName>
        <ecNumber evidence="1">7.1.2.2</ecNumber>
    </recommendedName>
    <alternativeName>
        <fullName evidence="1">ATP synthase F1 sector subunit alpha</fullName>
    </alternativeName>
    <alternativeName>
        <fullName evidence="1">F-ATPase subunit alpha</fullName>
    </alternativeName>
</protein>
<accession>Q4A602</accession>